<proteinExistence type="inferred from homology"/>
<protein>
    <recommendedName>
        <fullName>tRNA(His) guanylyltransferase</fullName>
        <ecNumber evidence="2">2.7.7.79</ecNumber>
    </recommendedName>
    <alternativeName>
        <fullName>tRNA-histidine guanylyltransferase</fullName>
    </alternativeName>
</protein>
<accession>Q6CW75</accession>
<keyword id="KW-0342">GTP-binding</keyword>
<keyword id="KW-0460">Magnesium</keyword>
<keyword id="KW-0479">Metal-binding</keyword>
<keyword id="KW-0547">Nucleotide-binding</keyword>
<keyword id="KW-0548">Nucleotidyltransferase</keyword>
<keyword id="KW-1185">Reference proteome</keyword>
<keyword id="KW-0808">Transferase</keyword>
<keyword id="KW-0819">tRNA processing</keyword>
<name>THG1_KLULA</name>
<dbReference type="EC" id="2.7.7.79" evidence="2"/>
<dbReference type="EMBL" id="CR382122">
    <property type="protein sequence ID" value="CAH02207.1"/>
    <property type="molecule type" value="Genomic_DNA"/>
</dbReference>
<dbReference type="RefSeq" id="XP_451814.1">
    <property type="nucleotide sequence ID" value="XM_451814.1"/>
</dbReference>
<dbReference type="SMR" id="Q6CW75"/>
<dbReference type="FunCoup" id="Q6CW75">
    <property type="interactions" value="797"/>
</dbReference>
<dbReference type="STRING" id="284590.Q6CW75"/>
<dbReference type="PaxDb" id="284590-Q6CW75"/>
<dbReference type="KEGG" id="kla:KLLA0_B06237g"/>
<dbReference type="eggNOG" id="KOG2721">
    <property type="taxonomic scope" value="Eukaryota"/>
</dbReference>
<dbReference type="HOGENOM" id="CLU_044271_0_1_1"/>
<dbReference type="InParanoid" id="Q6CW75"/>
<dbReference type="OMA" id="WKQHTEI"/>
<dbReference type="Proteomes" id="UP000000598">
    <property type="component" value="Chromosome B"/>
</dbReference>
<dbReference type="GO" id="GO:0005525">
    <property type="term" value="F:GTP binding"/>
    <property type="evidence" value="ECO:0007669"/>
    <property type="project" value="UniProtKB-KW"/>
</dbReference>
<dbReference type="GO" id="GO:0000287">
    <property type="term" value="F:magnesium ion binding"/>
    <property type="evidence" value="ECO:0007669"/>
    <property type="project" value="InterPro"/>
</dbReference>
<dbReference type="GO" id="GO:0008193">
    <property type="term" value="F:tRNA guanylyltransferase activity"/>
    <property type="evidence" value="ECO:0000250"/>
    <property type="project" value="UniProtKB"/>
</dbReference>
<dbReference type="GO" id="GO:0006400">
    <property type="term" value="P:tRNA modification"/>
    <property type="evidence" value="ECO:0000250"/>
    <property type="project" value="UniProtKB"/>
</dbReference>
<dbReference type="GO" id="GO:0008033">
    <property type="term" value="P:tRNA processing"/>
    <property type="evidence" value="ECO:0000250"/>
    <property type="project" value="UniProtKB"/>
</dbReference>
<dbReference type="FunFam" id="3.30.70.3000:FF:000003">
    <property type="entry name" value="tRNA(His) guanylyltransferase"/>
    <property type="match status" value="1"/>
</dbReference>
<dbReference type="Gene3D" id="3.30.70.3000">
    <property type="match status" value="1"/>
</dbReference>
<dbReference type="InterPro" id="IPR025845">
    <property type="entry name" value="Thg1_C_dom"/>
</dbReference>
<dbReference type="InterPro" id="IPR024956">
    <property type="entry name" value="tRNAHis_GuaTrfase_cat"/>
</dbReference>
<dbReference type="InterPro" id="IPR007537">
    <property type="entry name" value="tRNAHis_GuaTrfase_Thg1"/>
</dbReference>
<dbReference type="InterPro" id="IPR038469">
    <property type="entry name" value="tRNAHis_GuaTrfase_Thg1_sf"/>
</dbReference>
<dbReference type="PANTHER" id="PTHR12729">
    <property type="entry name" value="TRNA(HIS) GUANYLYLTRANSFERASE-RELATED"/>
    <property type="match status" value="1"/>
</dbReference>
<dbReference type="PANTHER" id="PTHR12729:SF6">
    <property type="entry name" value="TRNA(HIS) GUANYLYLTRANSFERASE-RELATED"/>
    <property type="match status" value="1"/>
</dbReference>
<dbReference type="Pfam" id="PF04446">
    <property type="entry name" value="Thg1"/>
    <property type="match status" value="1"/>
</dbReference>
<dbReference type="Pfam" id="PF14413">
    <property type="entry name" value="Thg1C"/>
    <property type="match status" value="1"/>
</dbReference>
<dbReference type="PIRSF" id="PIRSF028980">
    <property type="entry name" value="tRNAHis_guanylyltransferase"/>
    <property type="match status" value="1"/>
</dbReference>
<reference key="1">
    <citation type="journal article" date="2004" name="Nature">
        <title>Genome evolution in yeasts.</title>
        <authorList>
            <person name="Dujon B."/>
            <person name="Sherman D."/>
            <person name="Fischer G."/>
            <person name="Durrens P."/>
            <person name="Casaregola S."/>
            <person name="Lafontaine I."/>
            <person name="de Montigny J."/>
            <person name="Marck C."/>
            <person name="Neuveglise C."/>
            <person name="Talla E."/>
            <person name="Goffard N."/>
            <person name="Frangeul L."/>
            <person name="Aigle M."/>
            <person name="Anthouard V."/>
            <person name="Babour A."/>
            <person name="Barbe V."/>
            <person name="Barnay S."/>
            <person name="Blanchin S."/>
            <person name="Beckerich J.-M."/>
            <person name="Beyne E."/>
            <person name="Bleykasten C."/>
            <person name="Boisrame A."/>
            <person name="Boyer J."/>
            <person name="Cattolico L."/>
            <person name="Confanioleri F."/>
            <person name="de Daruvar A."/>
            <person name="Despons L."/>
            <person name="Fabre E."/>
            <person name="Fairhead C."/>
            <person name="Ferry-Dumazet H."/>
            <person name="Groppi A."/>
            <person name="Hantraye F."/>
            <person name="Hennequin C."/>
            <person name="Jauniaux N."/>
            <person name="Joyet P."/>
            <person name="Kachouri R."/>
            <person name="Kerrest A."/>
            <person name="Koszul R."/>
            <person name="Lemaire M."/>
            <person name="Lesur I."/>
            <person name="Ma L."/>
            <person name="Muller H."/>
            <person name="Nicaud J.-M."/>
            <person name="Nikolski M."/>
            <person name="Oztas S."/>
            <person name="Ozier-Kalogeropoulos O."/>
            <person name="Pellenz S."/>
            <person name="Potier S."/>
            <person name="Richard G.-F."/>
            <person name="Straub M.-L."/>
            <person name="Suleau A."/>
            <person name="Swennen D."/>
            <person name="Tekaia F."/>
            <person name="Wesolowski-Louvel M."/>
            <person name="Westhof E."/>
            <person name="Wirth B."/>
            <person name="Zeniou-Meyer M."/>
            <person name="Zivanovic Y."/>
            <person name="Bolotin-Fukuhara M."/>
            <person name="Thierry A."/>
            <person name="Bouchier C."/>
            <person name="Caudron B."/>
            <person name="Scarpelli C."/>
            <person name="Gaillardin C."/>
            <person name="Weissenbach J."/>
            <person name="Wincker P."/>
            <person name="Souciet J.-L."/>
        </authorList>
    </citation>
    <scope>NUCLEOTIDE SEQUENCE [LARGE SCALE GENOMIC DNA]</scope>
    <source>
        <strain>ATCC 8585 / CBS 2359 / DSM 70799 / NBRC 1267 / NRRL Y-1140 / WM37</strain>
    </source>
</reference>
<feature type="chain" id="PRO_0000284991" description="tRNA(His) guanylyltransferase">
    <location>
        <begin position="1"/>
        <end position="237"/>
    </location>
</feature>
<feature type="binding site" evidence="1">
    <location>
        <begin position="29"/>
        <end position="34"/>
    </location>
    <ligand>
        <name>GTP</name>
        <dbReference type="ChEBI" id="CHEBI:37565"/>
    </ligand>
</feature>
<feature type="binding site" evidence="1">
    <location>
        <position position="29"/>
    </location>
    <ligand>
        <name>Mg(2+)</name>
        <dbReference type="ChEBI" id="CHEBI:18420"/>
        <label>1</label>
        <note>catalytic</note>
    </ligand>
</feature>
<feature type="binding site" evidence="1">
    <location>
        <position position="29"/>
    </location>
    <ligand>
        <name>Mg(2+)</name>
        <dbReference type="ChEBI" id="CHEBI:18420"/>
        <label>2</label>
        <note>catalytic</note>
    </ligand>
</feature>
<feature type="binding site" evidence="1">
    <location>
        <position position="30"/>
    </location>
    <ligand>
        <name>Mg(2+)</name>
        <dbReference type="ChEBI" id="CHEBI:18420"/>
        <label>1</label>
        <note>catalytic</note>
    </ligand>
</feature>
<feature type="binding site" evidence="1">
    <location>
        <begin position="76"/>
        <end position="77"/>
    </location>
    <ligand>
        <name>GTP</name>
        <dbReference type="ChEBI" id="CHEBI:37565"/>
    </ligand>
</feature>
<feature type="binding site" evidence="1">
    <location>
        <position position="77"/>
    </location>
    <ligand>
        <name>Mg(2+)</name>
        <dbReference type="ChEBI" id="CHEBI:18420"/>
        <label>1</label>
        <note>catalytic</note>
    </ligand>
</feature>
<feature type="binding site" evidence="1">
    <location>
        <position position="77"/>
    </location>
    <ligand>
        <name>Mg(2+)</name>
        <dbReference type="ChEBI" id="CHEBI:18420"/>
        <label>2</label>
        <note>catalytic</note>
    </ligand>
</feature>
<comment type="function">
    <text evidence="2">Adds a GMP to the 5'-end of tRNA(His) after transcription and RNase P cleavage.</text>
</comment>
<comment type="catalytic activity">
    <reaction evidence="2">
        <text>a 5'-end ribonucleotide-tRNA(His) + GTP + ATP + H2O = a 5'-end phospho-guanosine-ribonucleotide-tRNA(His) + AMP + 2 diphosphate + H(+)</text>
        <dbReference type="Rhea" id="RHEA:54564"/>
        <dbReference type="Rhea" id="RHEA-COMP:14193"/>
        <dbReference type="Rhea" id="RHEA-COMP:14917"/>
        <dbReference type="ChEBI" id="CHEBI:15377"/>
        <dbReference type="ChEBI" id="CHEBI:15378"/>
        <dbReference type="ChEBI" id="CHEBI:30616"/>
        <dbReference type="ChEBI" id="CHEBI:33019"/>
        <dbReference type="ChEBI" id="CHEBI:37565"/>
        <dbReference type="ChEBI" id="CHEBI:138282"/>
        <dbReference type="ChEBI" id="CHEBI:141847"/>
        <dbReference type="ChEBI" id="CHEBI:456215"/>
        <dbReference type="EC" id="2.7.7.79"/>
    </reaction>
</comment>
<comment type="cofactor">
    <cofactor evidence="1">
        <name>Mg(2+)</name>
        <dbReference type="ChEBI" id="CHEBI:18420"/>
    </cofactor>
    <text evidence="1">Binds 2 magnesium ions per subunit.</text>
</comment>
<comment type="similarity">
    <text evidence="3">Belongs to the tRNA(His) guanylyltransferase family.</text>
</comment>
<sequence>MAKSRFEYVRQFEVHDALLPDTYIVVRVDGKKFHEFSKYYNFAKPNDERALKLMNAAAKNVFMQYKQEMICAYGESDEYSFILKRDTKLFNRRRDKISTLFVSLFTANYVSLWNLFFPDVVLHHKHLPYFDSRCVCYPNLTVVKDYLSWRFVDTHINNLYNTVFWYLIIKCGLTPQESEQKLCGTLSSDKQEILFSECGINYNNEPEMYKKGSLVNSKGEIVHIDVVKQIDEIFNGF</sequence>
<organism>
    <name type="scientific">Kluyveromyces lactis (strain ATCC 8585 / CBS 2359 / DSM 70799 / NBRC 1267 / NRRL Y-1140 / WM37)</name>
    <name type="common">Yeast</name>
    <name type="synonym">Candida sphaerica</name>
    <dbReference type="NCBI Taxonomy" id="284590"/>
    <lineage>
        <taxon>Eukaryota</taxon>
        <taxon>Fungi</taxon>
        <taxon>Dikarya</taxon>
        <taxon>Ascomycota</taxon>
        <taxon>Saccharomycotina</taxon>
        <taxon>Saccharomycetes</taxon>
        <taxon>Saccharomycetales</taxon>
        <taxon>Saccharomycetaceae</taxon>
        <taxon>Kluyveromyces</taxon>
    </lineage>
</organism>
<gene>
    <name type="primary">THG1</name>
    <name type="ordered locus">KLLA0B06237g</name>
</gene>
<evidence type="ECO:0000250" key="1"/>
<evidence type="ECO:0000250" key="2">
    <source>
        <dbReference type="UniProtKB" id="P53215"/>
    </source>
</evidence>
<evidence type="ECO:0000305" key="3"/>